<comment type="function">
    <text evidence="1">Part of the Tol-Pal system, which plays a role in outer membrane invagination during cell division and is important for maintaining outer membrane integrity. TolB occupies a key intermediary position in the Tol-Pal system because it communicates directly with both membrane-embedded components, Pal in the outer membrane and TolA in the inner membrane.</text>
</comment>
<comment type="subunit">
    <text evidence="1">The Tol-Pal system is composed of five core proteins: the inner membrane proteins TolA, TolQ and TolR, the periplasmic protein TolB and the outer membrane protein Pal. They form a network linking the inner and outer membranes and the peptidoglycan layer.</text>
</comment>
<comment type="subcellular location">
    <subcellularLocation>
        <location evidence="1">Periplasm</location>
    </subcellularLocation>
</comment>
<comment type="similarity">
    <text evidence="1">Belongs to the TolB family.</text>
</comment>
<keyword id="KW-0131">Cell cycle</keyword>
<keyword id="KW-0132">Cell division</keyword>
<keyword id="KW-0574">Periplasm</keyword>
<keyword id="KW-0732">Signal</keyword>
<proteinExistence type="inferred from homology"/>
<evidence type="ECO:0000255" key="1">
    <source>
        <dbReference type="HAMAP-Rule" id="MF_00671"/>
    </source>
</evidence>
<reference key="1">
    <citation type="journal article" date="2010" name="J. Bacteriol.">
        <title>Genome sequence of the deep-rooted Yersinia pestis strain Angola reveals new insights into the evolution and pangenome of the plague bacterium.</title>
        <authorList>
            <person name="Eppinger M."/>
            <person name="Worsham P.L."/>
            <person name="Nikolich M.P."/>
            <person name="Riley D.R."/>
            <person name="Sebastian Y."/>
            <person name="Mou S."/>
            <person name="Achtman M."/>
            <person name="Lindler L.E."/>
            <person name="Ravel J."/>
        </authorList>
    </citation>
    <scope>NUCLEOTIDE SEQUENCE [LARGE SCALE GENOMIC DNA]</scope>
    <source>
        <strain>Angola</strain>
    </source>
</reference>
<protein>
    <recommendedName>
        <fullName evidence="1">Tol-Pal system protein TolB</fullName>
    </recommendedName>
</protein>
<accession>A9R2G2</accession>
<dbReference type="EMBL" id="CP000901">
    <property type="protein sequence ID" value="ABX85125.1"/>
    <property type="molecule type" value="Genomic_DNA"/>
</dbReference>
<dbReference type="RefSeq" id="WP_002210738.1">
    <property type="nucleotide sequence ID" value="NZ_CP009935.1"/>
</dbReference>
<dbReference type="SMR" id="A9R2G2"/>
<dbReference type="GeneID" id="57977261"/>
<dbReference type="KEGG" id="ypg:YpAngola_A1397"/>
<dbReference type="PATRIC" id="fig|349746.12.peg.2364"/>
<dbReference type="GO" id="GO:0042597">
    <property type="term" value="C:periplasmic space"/>
    <property type="evidence" value="ECO:0007669"/>
    <property type="project" value="UniProtKB-SubCell"/>
</dbReference>
<dbReference type="GO" id="GO:0051301">
    <property type="term" value="P:cell division"/>
    <property type="evidence" value="ECO:0007669"/>
    <property type="project" value="UniProtKB-UniRule"/>
</dbReference>
<dbReference type="GO" id="GO:0017038">
    <property type="term" value="P:protein import"/>
    <property type="evidence" value="ECO:0007669"/>
    <property type="project" value="InterPro"/>
</dbReference>
<dbReference type="FunFam" id="2.120.10.30:FF:000022">
    <property type="entry name" value="Tol-Pal system protein TolB"/>
    <property type="match status" value="1"/>
</dbReference>
<dbReference type="Gene3D" id="2.120.10.30">
    <property type="entry name" value="TolB, C-terminal domain"/>
    <property type="match status" value="1"/>
</dbReference>
<dbReference type="Gene3D" id="3.40.50.10070">
    <property type="entry name" value="TolB, N-terminal domain"/>
    <property type="match status" value="1"/>
</dbReference>
<dbReference type="HAMAP" id="MF_00671">
    <property type="entry name" value="TolB"/>
    <property type="match status" value="1"/>
</dbReference>
<dbReference type="InterPro" id="IPR011042">
    <property type="entry name" value="6-blade_b-propeller_TolB-like"/>
</dbReference>
<dbReference type="InterPro" id="IPR011659">
    <property type="entry name" value="PD40"/>
</dbReference>
<dbReference type="InterPro" id="IPR014167">
    <property type="entry name" value="Tol-Pal_TolB"/>
</dbReference>
<dbReference type="InterPro" id="IPR007195">
    <property type="entry name" value="TolB_N"/>
</dbReference>
<dbReference type="NCBIfam" id="TIGR02800">
    <property type="entry name" value="propeller_TolB"/>
    <property type="match status" value="1"/>
</dbReference>
<dbReference type="PANTHER" id="PTHR36842:SF1">
    <property type="entry name" value="PROTEIN TOLB"/>
    <property type="match status" value="1"/>
</dbReference>
<dbReference type="PANTHER" id="PTHR36842">
    <property type="entry name" value="PROTEIN TOLB HOMOLOG"/>
    <property type="match status" value="1"/>
</dbReference>
<dbReference type="Pfam" id="PF07676">
    <property type="entry name" value="PD40"/>
    <property type="match status" value="4"/>
</dbReference>
<dbReference type="Pfam" id="PF04052">
    <property type="entry name" value="TolB_N"/>
    <property type="match status" value="1"/>
</dbReference>
<dbReference type="SUPFAM" id="SSF52964">
    <property type="entry name" value="TolB, N-terminal domain"/>
    <property type="match status" value="1"/>
</dbReference>
<dbReference type="SUPFAM" id="SSF69304">
    <property type="entry name" value="Tricorn protease N-terminal domain"/>
    <property type="match status" value="1"/>
</dbReference>
<feature type="signal peptide" evidence="1">
    <location>
        <begin position="1"/>
        <end position="21"/>
    </location>
</feature>
<feature type="chain" id="PRO_1000131542" description="Tol-Pal system protein TolB" evidence="1">
    <location>
        <begin position="22"/>
        <end position="430"/>
    </location>
</feature>
<sequence length="430" mass="46045">MKQAFRVALGFLVLWASVLHAEVRIEITQGVDSARPIGVVPFKWMGPGTPPEEIGAIVGADLRNSGKFNPIDAARMPQQPSTAAEVTPAAWTALGIDAVVVGQVQPSADGSYVVSYQLVDTSGSAGSILAQNQYKVTKQWLRYSAHTVSDEVFEKLTGIKGAFRTRIAYVVKTNGGKFPHELRVSDYDGYNQFVVHRSPEPLMSPAWSPDGSKIAYVTFESGKSALVIQTLANGAIRQVASFPRHNGAPAFSPDGTKLAFALSKSGSLNLYVMDLASGQISQVTDGRSNNTEPSWFPDSQNLAYTSDQGGRPQVYKVNINGGVPQRITWEGSQNQNADVSPDGKFLVLVSSNGGAQHIAKQDLETGAVQVLTDTLLDETPSIAPNGTMVIYSSTQGLGSVLQLVSTDGRFKARLPATDGQVKFPAWSPYL</sequence>
<gene>
    <name evidence="1" type="primary">tolB</name>
    <name type="ordered locus">YpAngola_A1397</name>
</gene>
<organism>
    <name type="scientific">Yersinia pestis bv. Antiqua (strain Angola)</name>
    <dbReference type="NCBI Taxonomy" id="349746"/>
    <lineage>
        <taxon>Bacteria</taxon>
        <taxon>Pseudomonadati</taxon>
        <taxon>Pseudomonadota</taxon>
        <taxon>Gammaproteobacteria</taxon>
        <taxon>Enterobacterales</taxon>
        <taxon>Yersiniaceae</taxon>
        <taxon>Yersinia</taxon>
    </lineage>
</organism>
<name>TOLB_YERPG</name>